<name>RS12B_SCHPO</name>
<protein>
    <recommendedName>
        <fullName evidence="3">Small ribosomal subunit protein eS12B</fullName>
    </recommendedName>
    <alternativeName>
        <fullName>40S ribosomal protein S12-B</fullName>
    </alternativeName>
</protein>
<evidence type="ECO:0000250" key="1">
    <source>
        <dbReference type="UniProtKB" id="P48589"/>
    </source>
</evidence>
<evidence type="ECO:0000269" key="2">
    <source>
    </source>
</evidence>
<evidence type="ECO:0000305" key="3"/>
<feature type="chain" id="PRO_0000122339" description="Small ribosomal subunit protein eS12B">
    <location>
        <begin position="1"/>
        <end position="148"/>
    </location>
</feature>
<gene>
    <name type="primary">rps1202</name>
    <name type="synonym">rps12b</name>
    <name type="ORF">SPBC1685.02c</name>
</gene>
<keyword id="KW-0963">Cytoplasm</keyword>
<keyword id="KW-1185">Reference proteome</keyword>
<keyword id="KW-0687">Ribonucleoprotein</keyword>
<keyword id="KW-0689">Ribosomal protein</keyword>
<organism>
    <name type="scientific">Schizosaccharomyces pombe (strain 972 / ATCC 24843)</name>
    <name type="common">Fission yeast</name>
    <dbReference type="NCBI Taxonomy" id="284812"/>
    <lineage>
        <taxon>Eukaryota</taxon>
        <taxon>Fungi</taxon>
        <taxon>Dikarya</taxon>
        <taxon>Ascomycota</taxon>
        <taxon>Taphrinomycotina</taxon>
        <taxon>Schizosaccharomycetes</taxon>
        <taxon>Schizosaccharomycetales</taxon>
        <taxon>Schizosaccharomycetaceae</taxon>
        <taxon>Schizosaccharomyces</taxon>
    </lineage>
</organism>
<proteinExistence type="inferred from homology"/>
<accession>O74322</accession>
<comment type="function">
    <text evidence="1">Component of the ribosome, a large ribonucleoprotein complex responsible for the synthesis of proteins in the cell. The small ribosomal subunit (SSU) binds messenger RNAs (mRNAs) and translates the encoded message by selecting cognate aminoacyl-transfer RNA (tRNA) molecules. The large subunit (LSU) contains the ribosomal catalytic site termed the peptidyl transferase center (PTC), which catalyzes the formation of peptide bonds, thereby polymerizing the amino acids delivered by tRNAs into a polypeptide chain. The nascent polypeptides leave the ribosome through a tunnel in the LSU and interact with protein factors that function in enzymatic processing, targeting, and the membrane insertion of nascent chains at the exit of the ribosomal tunnel.</text>
</comment>
<comment type="subunit">
    <text evidence="1">Component of the small ribosomal subunit (SSU). Mature yeast ribosomes consist of a small (40S) and a large (60S) subunit. The 40S small subunit contains 1 molecule of ribosomal RNA (18S rRNA) and at least 33 different proteins. The large 60S subunit contains 3 rRNA molecules (25S, 5.8S and 5S rRNA) and at least 46 different proteins.</text>
</comment>
<comment type="subcellular location">
    <subcellularLocation>
        <location evidence="2">Cytoplasm</location>
    </subcellularLocation>
</comment>
<comment type="miscellaneous">
    <text>There are 2 genes for eS12 in S.pombe.</text>
</comment>
<comment type="similarity">
    <text evidence="3">Belongs to the eukaryotic ribosomal protein eS12 family.</text>
</comment>
<dbReference type="EMBL" id="CU329671">
    <property type="protein sequence ID" value="CAA20050.1"/>
    <property type="molecule type" value="Genomic_DNA"/>
</dbReference>
<dbReference type="PIR" id="T39518">
    <property type="entry name" value="T39518"/>
</dbReference>
<dbReference type="RefSeq" id="NP_595206.1">
    <property type="nucleotide sequence ID" value="NM_001021112.2"/>
</dbReference>
<dbReference type="SMR" id="O74322"/>
<dbReference type="BioGRID" id="276559">
    <property type="interactions" value="14"/>
</dbReference>
<dbReference type="FunCoup" id="O74322">
    <property type="interactions" value="500"/>
</dbReference>
<dbReference type="STRING" id="284812.O74322"/>
<dbReference type="iPTMnet" id="O74322"/>
<dbReference type="PaxDb" id="4896-SPBC1685.02c.1"/>
<dbReference type="EnsemblFungi" id="SPBC1685.02c.1">
    <property type="protein sequence ID" value="SPBC1685.02c.1:pep"/>
    <property type="gene ID" value="SPBC1685.02c"/>
</dbReference>
<dbReference type="GeneID" id="2540015"/>
<dbReference type="KEGG" id="spo:2540015"/>
<dbReference type="PomBase" id="SPBC1685.02c">
    <property type="gene designation" value="rps1202"/>
</dbReference>
<dbReference type="VEuPathDB" id="FungiDB:SPBC1685.02c"/>
<dbReference type="eggNOG" id="KOG3406">
    <property type="taxonomic scope" value="Eukaryota"/>
</dbReference>
<dbReference type="HOGENOM" id="CLU_110343_1_0_1"/>
<dbReference type="InParanoid" id="O74322"/>
<dbReference type="OMA" id="CESCTEA"/>
<dbReference type="PhylomeDB" id="O74322"/>
<dbReference type="Reactome" id="R-SPO-156827">
    <property type="pathway name" value="L13a-mediated translational silencing of Ceruloplasmin expression"/>
</dbReference>
<dbReference type="Reactome" id="R-SPO-1799339">
    <property type="pathway name" value="SRP-dependent cotranslational protein targeting to membrane"/>
</dbReference>
<dbReference type="Reactome" id="R-SPO-72649">
    <property type="pathway name" value="Translation initiation complex formation"/>
</dbReference>
<dbReference type="Reactome" id="R-SPO-72689">
    <property type="pathway name" value="Formation of a pool of free 40S subunits"/>
</dbReference>
<dbReference type="Reactome" id="R-SPO-72695">
    <property type="pathway name" value="Formation of the ternary complex, and subsequently, the 43S complex"/>
</dbReference>
<dbReference type="Reactome" id="R-SPO-72702">
    <property type="pathway name" value="Ribosomal scanning and start codon recognition"/>
</dbReference>
<dbReference type="Reactome" id="R-SPO-72706">
    <property type="pathway name" value="GTP hydrolysis and joining of the 60S ribosomal subunit"/>
</dbReference>
<dbReference type="Reactome" id="R-SPO-975956">
    <property type="pathway name" value="Nonsense Mediated Decay (NMD) independent of the Exon Junction Complex (EJC)"/>
</dbReference>
<dbReference type="Reactome" id="R-SPO-975957">
    <property type="pathway name" value="Nonsense Mediated Decay (NMD) enhanced by the Exon Junction Complex (EJC)"/>
</dbReference>
<dbReference type="PRO" id="PR:O74322"/>
<dbReference type="Proteomes" id="UP000002485">
    <property type="component" value="Chromosome II"/>
</dbReference>
<dbReference type="GO" id="GO:0005829">
    <property type="term" value="C:cytosol"/>
    <property type="evidence" value="ECO:0007005"/>
    <property type="project" value="PomBase"/>
</dbReference>
<dbReference type="GO" id="GO:0022627">
    <property type="term" value="C:cytosolic small ribosomal subunit"/>
    <property type="evidence" value="ECO:0000318"/>
    <property type="project" value="GO_Central"/>
</dbReference>
<dbReference type="GO" id="GO:0005634">
    <property type="term" value="C:nucleus"/>
    <property type="evidence" value="ECO:0007005"/>
    <property type="project" value="PomBase"/>
</dbReference>
<dbReference type="GO" id="GO:0003735">
    <property type="term" value="F:structural constituent of ribosome"/>
    <property type="evidence" value="ECO:0000318"/>
    <property type="project" value="GO_Central"/>
</dbReference>
<dbReference type="GO" id="GO:0002181">
    <property type="term" value="P:cytoplasmic translation"/>
    <property type="evidence" value="ECO:0000266"/>
    <property type="project" value="PomBase"/>
</dbReference>
<dbReference type="GO" id="GO:1990145">
    <property type="term" value="P:maintenance of translational fidelity"/>
    <property type="evidence" value="ECO:0000318"/>
    <property type="project" value="GO_Central"/>
</dbReference>
<dbReference type="GO" id="GO:0042274">
    <property type="term" value="P:ribosomal small subunit biogenesis"/>
    <property type="evidence" value="ECO:0000318"/>
    <property type="project" value="GO_Central"/>
</dbReference>
<dbReference type="FunFam" id="3.30.1330.30:FF:000005">
    <property type="entry name" value="40S ribosomal protein S12"/>
    <property type="match status" value="1"/>
</dbReference>
<dbReference type="Gene3D" id="3.30.1330.30">
    <property type="match status" value="1"/>
</dbReference>
<dbReference type="InterPro" id="IPR029064">
    <property type="entry name" value="Ribosomal_eL30-like_sf"/>
</dbReference>
<dbReference type="InterPro" id="IPR004038">
    <property type="entry name" value="Ribosomal_eL8/eL30/eS12/Gad45"/>
</dbReference>
<dbReference type="InterPro" id="IPR000530">
    <property type="entry name" value="Ribosomal_eS12"/>
</dbReference>
<dbReference type="InterPro" id="IPR047860">
    <property type="entry name" value="Ribosomal_eS12_CS"/>
</dbReference>
<dbReference type="PANTHER" id="PTHR11843">
    <property type="entry name" value="40S RIBOSOMAL PROTEIN S12"/>
    <property type="match status" value="1"/>
</dbReference>
<dbReference type="Pfam" id="PF01248">
    <property type="entry name" value="Ribosomal_L7Ae"/>
    <property type="match status" value="1"/>
</dbReference>
<dbReference type="PRINTS" id="PR00972">
    <property type="entry name" value="RIBSOMALS12E"/>
</dbReference>
<dbReference type="SUPFAM" id="SSF55315">
    <property type="entry name" value="L30e-like"/>
    <property type="match status" value="1"/>
</dbReference>
<dbReference type="PROSITE" id="PS01189">
    <property type="entry name" value="RIBOSOMAL_S12E"/>
    <property type="match status" value="1"/>
</dbReference>
<reference key="1">
    <citation type="journal article" date="2002" name="Nature">
        <title>The genome sequence of Schizosaccharomyces pombe.</title>
        <authorList>
            <person name="Wood V."/>
            <person name="Gwilliam R."/>
            <person name="Rajandream M.A."/>
            <person name="Lyne M.H."/>
            <person name="Lyne R."/>
            <person name="Stewart A."/>
            <person name="Sgouros J.G."/>
            <person name="Peat N."/>
            <person name="Hayles J."/>
            <person name="Baker S.G."/>
            <person name="Basham D."/>
            <person name="Bowman S."/>
            <person name="Brooks K."/>
            <person name="Brown D."/>
            <person name="Brown S."/>
            <person name="Chillingworth T."/>
            <person name="Churcher C.M."/>
            <person name="Collins M."/>
            <person name="Connor R."/>
            <person name="Cronin A."/>
            <person name="Davis P."/>
            <person name="Feltwell T."/>
            <person name="Fraser A."/>
            <person name="Gentles S."/>
            <person name="Goble A."/>
            <person name="Hamlin N."/>
            <person name="Harris D.E."/>
            <person name="Hidalgo J."/>
            <person name="Hodgson G."/>
            <person name="Holroyd S."/>
            <person name="Hornsby T."/>
            <person name="Howarth S."/>
            <person name="Huckle E.J."/>
            <person name="Hunt S."/>
            <person name="Jagels K."/>
            <person name="James K.D."/>
            <person name="Jones L."/>
            <person name="Jones M."/>
            <person name="Leather S."/>
            <person name="McDonald S."/>
            <person name="McLean J."/>
            <person name="Mooney P."/>
            <person name="Moule S."/>
            <person name="Mungall K.L."/>
            <person name="Murphy L.D."/>
            <person name="Niblett D."/>
            <person name="Odell C."/>
            <person name="Oliver K."/>
            <person name="O'Neil S."/>
            <person name="Pearson D."/>
            <person name="Quail M.A."/>
            <person name="Rabbinowitsch E."/>
            <person name="Rutherford K.M."/>
            <person name="Rutter S."/>
            <person name="Saunders D."/>
            <person name="Seeger K."/>
            <person name="Sharp S."/>
            <person name="Skelton J."/>
            <person name="Simmonds M.N."/>
            <person name="Squares R."/>
            <person name="Squares S."/>
            <person name="Stevens K."/>
            <person name="Taylor K."/>
            <person name="Taylor R.G."/>
            <person name="Tivey A."/>
            <person name="Walsh S.V."/>
            <person name="Warren T."/>
            <person name="Whitehead S."/>
            <person name="Woodward J.R."/>
            <person name="Volckaert G."/>
            <person name="Aert R."/>
            <person name="Robben J."/>
            <person name="Grymonprez B."/>
            <person name="Weltjens I."/>
            <person name="Vanstreels E."/>
            <person name="Rieger M."/>
            <person name="Schaefer M."/>
            <person name="Mueller-Auer S."/>
            <person name="Gabel C."/>
            <person name="Fuchs M."/>
            <person name="Duesterhoeft A."/>
            <person name="Fritzc C."/>
            <person name="Holzer E."/>
            <person name="Moestl D."/>
            <person name="Hilbert H."/>
            <person name="Borzym K."/>
            <person name="Langer I."/>
            <person name="Beck A."/>
            <person name="Lehrach H."/>
            <person name="Reinhardt R."/>
            <person name="Pohl T.M."/>
            <person name="Eger P."/>
            <person name="Zimmermann W."/>
            <person name="Wedler H."/>
            <person name="Wambutt R."/>
            <person name="Purnelle B."/>
            <person name="Goffeau A."/>
            <person name="Cadieu E."/>
            <person name="Dreano S."/>
            <person name="Gloux S."/>
            <person name="Lelaure V."/>
            <person name="Mottier S."/>
            <person name="Galibert F."/>
            <person name="Aves S.J."/>
            <person name="Xiang Z."/>
            <person name="Hunt C."/>
            <person name="Moore K."/>
            <person name="Hurst S.M."/>
            <person name="Lucas M."/>
            <person name="Rochet M."/>
            <person name="Gaillardin C."/>
            <person name="Tallada V.A."/>
            <person name="Garzon A."/>
            <person name="Thode G."/>
            <person name="Daga R.R."/>
            <person name="Cruzado L."/>
            <person name="Jimenez J."/>
            <person name="Sanchez M."/>
            <person name="del Rey F."/>
            <person name="Benito J."/>
            <person name="Dominguez A."/>
            <person name="Revuelta J.L."/>
            <person name="Moreno S."/>
            <person name="Armstrong J."/>
            <person name="Forsburg S.L."/>
            <person name="Cerutti L."/>
            <person name="Lowe T."/>
            <person name="McCombie W.R."/>
            <person name="Paulsen I."/>
            <person name="Potashkin J."/>
            <person name="Shpakovski G.V."/>
            <person name="Ussery D."/>
            <person name="Barrell B.G."/>
            <person name="Nurse P."/>
        </authorList>
    </citation>
    <scope>NUCLEOTIDE SEQUENCE [LARGE SCALE GENOMIC DNA]</scope>
    <source>
        <strain>972 / ATCC 24843</strain>
    </source>
</reference>
<reference key="2">
    <citation type="journal article" date="2006" name="Nat. Biotechnol.">
        <title>ORFeome cloning and global analysis of protein localization in the fission yeast Schizosaccharomyces pombe.</title>
        <authorList>
            <person name="Matsuyama A."/>
            <person name="Arai R."/>
            <person name="Yashiroda Y."/>
            <person name="Shirai A."/>
            <person name="Kamata A."/>
            <person name="Sekido S."/>
            <person name="Kobayashi Y."/>
            <person name="Hashimoto A."/>
            <person name="Hamamoto M."/>
            <person name="Hiraoka Y."/>
            <person name="Horinouchi S."/>
            <person name="Yoshida M."/>
        </authorList>
    </citation>
    <scope>SUBCELLULAR LOCATION [LARGE SCALE ANALYSIS]</scope>
</reference>
<sequence length="148" mass="15871">MSTEGDHVPQAEEVIETVEVVEEETGSSPLSVEDSLKEVLKRALVHDGLARGIREASKALDRRQAHLCVLCESCDQEAYVKLVEALCAESQTPLVKVADPKILGEWAGLCVLDRDGNARKVVGCSCVAVTDYGEDSVALQTLLSSFAA</sequence>